<organism>
    <name type="scientific">Leishmania braziliensis</name>
    <dbReference type="NCBI Taxonomy" id="5660"/>
    <lineage>
        <taxon>Eukaryota</taxon>
        <taxon>Discoba</taxon>
        <taxon>Euglenozoa</taxon>
        <taxon>Kinetoplastea</taxon>
        <taxon>Metakinetoplastina</taxon>
        <taxon>Trypanosomatida</taxon>
        <taxon>Trypanosomatidae</taxon>
        <taxon>Leishmaniinae</taxon>
        <taxon>Leishmania</taxon>
        <taxon>Leishmania braziliensis species complex</taxon>
    </lineage>
</organism>
<accession>Q04668</accession>
<reference key="1">
    <citation type="submission" date="1993-01" db="EMBL/GenBank/DDBJ databases">
        <authorList>
            <person name="Martinez C."/>
            <person name="Hung A."/>
            <person name="Alonso G."/>
            <person name="Ponte A."/>
            <person name="Ramirez J.L."/>
        </authorList>
    </citation>
    <scope>NUCLEOTIDE SEQUENCE [MRNA]</scope>
</reference>
<name>KPYK_LEIBR</name>
<protein>
    <recommendedName>
        <fullName>Pyruvate kinase</fullName>
        <shortName>PK</shortName>
        <ecNumber>2.7.1.40</ecNumber>
    </recommendedName>
</protein>
<keyword id="KW-0067">ATP-binding</keyword>
<keyword id="KW-0324">Glycolysis</keyword>
<keyword id="KW-0418">Kinase</keyword>
<keyword id="KW-0460">Magnesium</keyword>
<keyword id="KW-0479">Metal-binding</keyword>
<keyword id="KW-0547">Nucleotide-binding</keyword>
<keyword id="KW-0630">Potassium</keyword>
<keyword id="KW-0670">Pyruvate</keyword>
<keyword id="KW-0808">Transferase</keyword>
<evidence type="ECO:0000250" key="1"/>
<evidence type="ECO:0000250" key="2">
    <source>
        <dbReference type="UniProtKB" id="P14618"/>
    </source>
</evidence>
<evidence type="ECO:0000305" key="3"/>
<proteinExistence type="evidence at transcript level"/>
<sequence length="91" mass="9704">MSQLAHNLTLSIFEPLRTTGTIVCTIGPSTQSVEALKGLIKSGMSVARMNFSHGSHEYHQTTINNVRQAAAELGVNIAIALDTKGPEIRTG</sequence>
<dbReference type="EC" id="2.7.1.40"/>
<dbReference type="EMBL" id="L08597">
    <property type="protein sequence ID" value="AAA29260.1"/>
    <property type="molecule type" value="mRNA"/>
</dbReference>
<dbReference type="SMR" id="Q04668"/>
<dbReference type="VEuPathDB" id="TriTrypDB:LbrM.34.0070"/>
<dbReference type="UniPathway" id="UPA00109">
    <property type="reaction ID" value="UER00188"/>
</dbReference>
<dbReference type="GO" id="GO:0005524">
    <property type="term" value="F:ATP binding"/>
    <property type="evidence" value="ECO:0007669"/>
    <property type="project" value="UniProtKB-KW"/>
</dbReference>
<dbReference type="GO" id="GO:0016301">
    <property type="term" value="F:kinase activity"/>
    <property type="evidence" value="ECO:0007669"/>
    <property type="project" value="UniProtKB-KW"/>
</dbReference>
<dbReference type="GO" id="GO:0000287">
    <property type="term" value="F:magnesium ion binding"/>
    <property type="evidence" value="ECO:0007669"/>
    <property type="project" value="InterPro"/>
</dbReference>
<dbReference type="GO" id="GO:0030955">
    <property type="term" value="F:potassium ion binding"/>
    <property type="evidence" value="ECO:0007669"/>
    <property type="project" value="InterPro"/>
</dbReference>
<dbReference type="GO" id="GO:0004743">
    <property type="term" value="F:pyruvate kinase activity"/>
    <property type="evidence" value="ECO:0007669"/>
    <property type="project" value="UniProtKB-EC"/>
</dbReference>
<dbReference type="Gene3D" id="3.20.20.60">
    <property type="entry name" value="Phosphoenolpyruvate-binding domains"/>
    <property type="match status" value="1"/>
</dbReference>
<dbReference type="InterPro" id="IPR001697">
    <property type="entry name" value="Pyr_Knase"/>
</dbReference>
<dbReference type="InterPro" id="IPR015813">
    <property type="entry name" value="Pyrv/PenolPyrv_kinase-like_dom"/>
</dbReference>
<dbReference type="InterPro" id="IPR040442">
    <property type="entry name" value="Pyrv_kinase-like_dom_sf"/>
</dbReference>
<dbReference type="InterPro" id="IPR015793">
    <property type="entry name" value="Pyrv_Knase_brl"/>
</dbReference>
<dbReference type="PANTHER" id="PTHR11817">
    <property type="entry name" value="PYRUVATE KINASE"/>
    <property type="match status" value="1"/>
</dbReference>
<dbReference type="Pfam" id="PF00224">
    <property type="entry name" value="PK"/>
    <property type="match status" value="1"/>
</dbReference>
<dbReference type="SUPFAM" id="SSF51621">
    <property type="entry name" value="Phosphoenolpyruvate/pyruvate domain"/>
    <property type="match status" value="1"/>
</dbReference>
<comment type="catalytic activity">
    <reaction>
        <text>pyruvate + ATP = phosphoenolpyruvate + ADP + H(+)</text>
        <dbReference type="Rhea" id="RHEA:18157"/>
        <dbReference type="ChEBI" id="CHEBI:15361"/>
        <dbReference type="ChEBI" id="CHEBI:15378"/>
        <dbReference type="ChEBI" id="CHEBI:30616"/>
        <dbReference type="ChEBI" id="CHEBI:58702"/>
        <dbReference type="ChEBI" id="CHEBI:456216"/>
        <dbReference type="EC" id="2.7.1.40"/>
    </reaction>
</comment>
<comment type="cofactor">
    <cofactor>
        <name>Mg(2+)</name>
        <dbReference type="ChEBI" id="CHEBI:18420"/>
    </cofactor>
</comment>
<comment type="cofactor">
    <cofactor>
        <name>K(+)</name>
        <dbReference type="ChEBI" id="CHEBI:29103"/>
    </cofactor>
</comment>
<comment type="pathway">
    <text>Carbohydrate degradation; glycolysis; pyruvate from D-glyceraldehyde 3-phosphate: step 5/5.</text>
</comment>
<comment type="subunit">
    <text evidence="1">Homotetramer.</text>
</comment>
<comment type="similarity">
    <text evidence="3">Belongs to the pyruvate kinase family.</text>
</comment>
<feature type="chain" id="PRO_0000112101" description="Pyruvate kinase">
    <location>
        <begin position="1"/>
        <end position="91" status="greater than"/>
    </location>
</feature>
<feature type="binding site" evidence="1">
    <location>
        <position position="48"/>
    </location>
    <ligand>
        <name>substrate</name>
    </ligand>
</feature>
<feature type="binding site" evidence="2">
    <location>
        <begin position="50"/>
        <end position="53"/>
    </location>
    <ligand>
        <name>ATP</name>
        <dbReference type="ChEBI" id="CHEBI:30616"/>
    </ligand>
</feature>
<feature type="binding site" evidence="1">
    <location>
        <position position="50"/>
    </location>
    <ligand>
        <name>K(+)</name>
        <dbReference type="ChEBI" id="CHEBI:29103"/>
    </ligand>
</feature>
<feature type="binding site" evidence="1">
    <location>
        <position position="52"/>
    </location>
    <ligand>
        <name>K(+)</name>
        <dbReference type="ChEBI" id="CHEBI:29103"/>
    </ligand>
</feature>
<feature type="binding site" evidence="1">
    <location>
        <position position="82"/>
    </location>
    <ligand>
        <name>K(+)</name>
        <dbReference type="ChEBI" id="CHEBI:29103"/>
    </ligand>
</feature>
<feature type="binding site" evidence="1">
    <location>
        <position position="83"/>
    </location>
    <ligand>
        <name>K(+)</name>
        <dbReference type="ChEBI" id="CHEBI:29103"/>
    </ligand>
</feature>
<feature type="binding site" evidence="2">
    <location>
        <position position="89"/>
    </location>
    <ligand>
        <name>ATP</name>
        <dbReference type="ChEBI" id="CHEBI:30616"/>
    </ligand>
</feature>
<feature type="non-terminal residue">
    <location>
        <position position="91"/>
    </location>
</feature>